<feature type="chain" id="PRO_1000140954" description="Small ribosomal subunit protein uS3">
    <location>
        <begin position="1"/>
        <end position="219"/>
    </location>
</feature>
<feature type="domain" description="KH type-2" evidence="1">
    <location>
        <begin position="39"/>
        <end position="107"/>
    </location>
</feature>
<keyword id="KW-1185">Reference proteome</keyword>
<keyword id="KW-0687">Ribonucleoprotein</keyword>
<keyword id="KW-0689">Ribosomal protein</keyword>
<keyword id="KW-0694">RNA-binding</keyword>
<keyword id="KW-0699">rRNA-binding</keyword>
<evidence type="ECO:0000255" key="1">
    <source>
        <dbReference type="HAMAP-Rule" id="MF_01309"/>
    </source>
</evidence>
<evidence type="ECO:0000305" key="2"/>
<protein>
    <recommendedName>
        <fullName evidence="1">Small ribosomal subunit protein uS3</fullName>
    </recommendedName>
    <alternativeName>
        <fullName evidence="2">30S ribosomal protein S3</fullName>
    </alternativeName>
</protein>
<accession>B8FES9</accession>
<dbReference type="EMBL" id="CP001322">
    <property type="protein sequence ID" value="ACL03606.1"/>
    <property type="molecule type" value="Genomic_DNA"/>
</dbReference>
<dbReference type="RefSeq" id="WP_012611037.1">
    <property type="nucleotide sequence ID" value="NC_011768.1"/>
</dbReference>
<dbReference type="SMR" id="B8FES9"/>
<dbReference type="KEGG" id="dal:Dalk_1909"/>
<dbReference type="eggNOG" id="COG0092">
    <property type="taxonomic scope" value="Bacteria"/>
</dbReference>
<dbReference type="HOGENOM" id="CLU_058591_0_2_7"/>
<dbReference type="Proteomes" id="UP000000739">
    <property type="component" value="Chromosome"/>
</dbReference>
<dbReference type="GO" id="GO:0022627">
    <property type="term" value="C:cytosolic small ribosomal subunit"/>
    <property type="evidence" value="ECO:0007669"/>
    <property type="project" value="TreeGrafter"/>
</dbReference>
<dbReference type="GO" id="GO:0003729">
    <property type="term" value="F:mRNA binding"/>
    <property type="evidence" value="ECO:0007669"/>
    <property type="project" value="UniProtKB-UniRule"/>
</dbReference>
<dbReference type="GO" id="GO:0019843">
    <property type="term" value="F:rRNA binding"/>
    <property type="evidence" value="ECO:0007669"/>
    <property type="project" value="UniProtKB-UniRule"/>
</dbReference>
<dbReference type="GO" id="GO:0003735">
    <property type="term" value="F:structural constituent of ribosome"/>
    <property type="evidence" value="ECO:0007669"/>
    <property type="project" value="InterPro"/>
</dbReference>
<dbReference type="GO" id="GO:0006412">
    <property type="term" value="P:translation"/>
    <property type="evidence" value="ECO:0007669"/>
    <property type="project" value="UniProtKB-UniRule"/>
</dbReference>
<dbReference type="CDD" id="cd02412">
    <property type="entry name" value="KH-II_30S_S3"/>
    <property type="match status" value="1"/>
</dbReference>
<dbReference type="FunFam" id="3.30.1140.32:FF:000002">
    <property type="entry name" value="30S ribosomal protein S3"/>
    <property type="match status" value="1"/>
</dbReference>
<dbReference type="FunFam" id="3.30.300.20:FF:000001">
    <property type="entry name" value="30S ribosomal protein S3"/>
    <property type="match status" value="1"/>
</dbReference>
<dbReference type="Gene3D" id="3.30.300.20">
    <property type="match status" value="1"/>
</dbReference>
<dbReference type="Gene3D" id="3.30.1140.32">
    <property type="entry name" value="Ribosomal protein S3, C-terminal domain"/>
    <property type="match status" value="1"/>
</dbReference>
<dbReference type="HAMAP" id="MF_01309_B">
    <property type="entry name" value="Ribosomal_uS3_B"/>
    <property type="match status" value="1"/>
</dbReference>
<dbReference type="InterPro" id="IPR004087">
    <property type="entry name" value="KH_dom"/>
</dbReference>
<dbReference type="InterPro" id="IPR015946">
    <property type="entry name" value="KH_dom-like_a/b"/>
</dbReference>
<dbReference type="InterPro" id="IPR004044">
    <property type="entry name" value="KH_dom_type_2"/>
</dbReference>
<dbReference type="InterPro" id="IPR009019">
    <property type="entry name" value="KH_sf_prok-type"/>
</dbReference>
<dbReference type="InterPro" id="IPR036419">
    <property type="entry name" value="Ribosomal_S3_C_sf"/>
</dbReference>
<dbReference type="InterPro" id="IPR005704">
    <property type="entry name" value="Ribosomal_uS3_bac-typ"/>
</dbReference>
<dbReference type="InterPro" id="IPR001351">
    <property type="entry name" value="Ribosomal_uS3_C"/>
</dbReference>
<dbReference type="InterPro" id="IPR018280">
    <property type="entry name" value="Ribosomal_uS3_CS"/>
</dbReference>
<dbReference type="NCBIfam" id="TIGR01009">
    <property type="entry name" value="rpsC_bact"/>
    <property type="match status" value="1"/>
</dbReference>
<dbReference type="PANTHER" id="PTHR11760">
    <property type="entry name" value="30S/40S RIBOSOMAL PROTEIN S3"/>
    <property type="match status" value="1"/>
</dbReference>
<dbReference type="PANTHER" id="PTHR11760:SF19">
    <property type="entry name" value="SMALL RIBOSOMAL SUBUNIT PROTEIN US3C"/>
    <property type="match status" value="1"/>
</dbReference>
<dbReference type="Pfam" id="PF07650">
    <property type="entry name" value="KH_2"/>
    <property type="match status" value="1"/>
</dbReference>
<dbReference type="Pfam" id="PF00189">
    <property type="entry name" value="Ribosomal_S3_C"/>
    <property type="match status" value="1"/>
</dbReference>
<dbReference type="SMART" id="SM00322">
    <property type="entry name" value="KH"/>
    <property type="match status" value="1"/>
</dbReference>
<dbReference type="SUPFAM" id="SSF54814">
    <property type="entry name" value="Prokaryotic type KH domain (KH-domain type II)"/>
    <property type="match status" value="1"/>
</dbReference>
<dbReference type="SUPFAM" id="SSF54821">
    <property type="entry name" value="Ribosomal protein S3 C-terminal domain"/>
    <property type="match status" value="1"/>
</dbReference>
<dbReference type="PROSITE" id="PS50823">
    <property type="entry name" value="KH_TYPE_2"/>
    <property type="match status" value="1"/>
</dbReference>
<dbReference type="PROSITE" id="PS00548">
    <property type="entry name" value="RIBOSOMAL_S3"/>
    <property type="match status" value="1"/>
</dbReference>
<comment type="function">
    <text evidence="1">Binds the lower part of the 30S subunit head. Binds mRNA in the 70S ribosome, positioning it for translation.</text>
</comment>
<comment type="subunit">
    <text evidence="1">Part of the 30S ribosomal subunit. Forms a tight complex with proteins S10 and S14.</text>
</comment>
<comment type="similarity">
    <text evidence="1">Belongs to the universal ribosomal protein uS3 family.</text>
</comment>
<reference key="1">
    <citation type="journal article" date="2012" name="Environ. Microbiol.">
        <title>The genome sequence of Desulfatibacillum alkenivorans AK-01: a blueprint for anaerobic alkane oxidation.</title>
        <authorList>
            <person name="Callaghan A.V."/>
            <person name="Morris B.E."/>
            <person name="Pereira I.A."/>
            <person name="McInerney M.J."/>
            <person name="Austin R.N."/>
            <person name="Groves J.T."/>
            <person name="Kukor J.J."/>
            <person name="Suflita J.M."/>
            <person name="Young L.Y."/>
            <person name="Zylstra G.J."/>
            <person name="Wawrik B."/>
        </authorList>
    </citation>
    <scope>NUCLEOTIDE SEQUENCE [LARGE SCALE GENOMIC DNA]</scope>
    <source>
        <strain>AK-01</strain>
    </source>
</reference>
<sequence>MGQKVNPIGLRLGIVKTWDSRWYAEKGKYAEFIREDFKLRKFLKKKLHHAGISKIEIERSGRRVRLRVFAARPGIVIGKKGSEIEQLKKELEKMVDNEVLIDIQEVRKPELDAQLVAENVAMQLERRVAFRRAMKRGISSAMRFGAQGVKIMAAGRLGGAEMARREWYREGRMPLHTLRADIDYGYTEANTTYGVIGVKVFIFKGEILKSDTEAANPTA</sequence>
<name>RS3_DESAL</name>
<organism>
    <name type="scientific">Desulfatibacillum aliphaticivorans</name>
    <dbReference type="NCBI Taxonomy" id="218208"/>
    <lineage>
        <taxon>Bacteria</taxon>
        <taxon>Pseudomonadati</taxon>
        <taxon>Thermodesulfobacteriota</taxon>
        <taxon>Desulfobacteria</taxon>
        <taxon>Desulfobacterales</taxon>
        <taxon>Desulfatibacillaceae</taxon>
        <taxon>Desulfatibacillum</taxon>
    </lineage>
</organism>
<proteinExistence type="inferred from homology"/>
<gene>
    <name evidence="1" type="primary">rpsC</name>
    <name type="ordered locus">Dalk_1909</name>
</gene>